<feature type="transit peptide" description="Mitochondrion" evidence="3">
    <location>
        <begin position="1"/>
        <end status="unknown"/>
    </location>
</feature>
<feature type="chain" id="PRO_0000330867" description="Radical S-adenosyl methionine domain-containing protein 1, mitochondrial">
    <location>
        <begin status="unknown"/>
        <end position="446"/>
    </location>
</feature>
<feature type="domain" description="Radical SAM core" evidence="4">
    <location>
        <begin position="15"/>
        <end position="277"/>
    </location>
</feature>
<feature type="binding site" evidence="1">
    <location>
        <position position="34"/>
    </location>
    <ligand>
        <name>[4Fe-4S] cluster</name>
        <dbReference type="ChEBI" id="CHEBI:49883"/>
        <note>4Fe-4S-S-AdoMet</note>
    </ligand>
</feature>
<feature type="binding site" evidence="1">
    <location>
        <position position="38"/>
    </location>
    <ligand>
        <name>[4Fe-4S] cluster</name>
        <dbReference type="ChEBI" id="CHEBI:49883"/>
        <note>4Fe-4S-S-AdoMet</note>
    </ligand>
</feature>
<feature type="binding site" evidence="1">
    <location>
        <position position="41"/>
    </location>
    <ligand>
        <name>[4Fe-4S] cluster</name>
        <dbReference type="ChEBI" id="CHEBI:49883"/>
        <note>4Fe-4S-S-AdoMet</note>
    </ligand>
</feature>
<feature type="binding site" evidence="1">
    <location>
        <position position="94"/>
    </location>
    <ligand>
        <name>S-adenosyl-L-methionine</name>
        <dbReference type="ChEBI" id="CHEBI:59789"/>
        <label>1</label>
    </ligand>
</feature>
<feature type="binding site" evidence="1">
    <location>
        <begin position="95"/>
        <end position="96"/>
    </location>
    <ligand>
        <name>S-adenosyl-L-methionine</name>
        <dbReference type="ChEBI" id="CHEBI:59789"/>
        <label>2</label>
    </ligand>
</feature>
<feature type="binding site" evidence="1">
    <location>
        <position position="130"/>
    </location>
    <ligand>
        <name>S-adenosyl-L-methionine</name>
        <dbReference type="ChEBI" id="CHEBI:59789"/>
        <label>1</label>
    </ligand>
</feature>
<feature type="binding site" evidence="1">
    <location>
        <position position="159"/>
    </location>
    <ligand>
        <name>S-adenosyl-L-methionine</name>
        <dbReference type="ChEBI" id="CHEBI:59789"/>
        <label>2</label>
    </ligand>
</feature>
<feature type="binding site" evidence="1">
    <location>
        <position position="171"/>
    </location>
    <ligand>
        <name>S-adenosyl-L-methionine</name>
        <dbReference type="ChEBI" id="CHEBI:59789"/>
        <label>2</label>
    </ligand>
</feature>
<feature type="binding site" evidence="1">
    <location>
        <position position="195"/>
    </location>
    <ligand>
        <name>S-adenosyl-L-methionine</name>
        <dbReference type="ChEBI" id="CHEBI:59789"/>
        <label>2</label>
    </ligand>
</feature>
<protein>
    <recommendedName>
        <fullName>Radical S-adenosyl methionine domain-containing protein 1, mitochondrial</fullName>
    </recommendedName>
    <alternativeName>
        <fullName>Putative heme chaperone</fullName>
    </alternativeName>
</protein>
<accession>Q54VE8</accession>
<gene>
    <name type="primary">rsad1</name>
    <name type="ORF">DDB_G0280411</name>
</gene>
<comment type="function">
    <text evidence="1 2">May be a heme chaperone, appears to bind heme. Homologous bacterial proteins do not have oxygen-independent coproporphyrinogen-III oxidase activity (By similarity). Binds 1 [4Fe-4S] cluster. The cluster is coordinated with 3 cysteines and an exchangeable S-adenosyl-L-methionine (By similarity).</text>
</comment>
<comment type="subcellular location">
    <subcellularLocation>
        <location evidence="5">Mitochondrion</location>
    </subcellularLocation>
</comment>
<comment type="miscellaneous">
    <text evidence="1">Might carry two S-adenosyl-L-methionine binding sites with only one binding to the iron-sulfur cluster.</text>
</comment>
<comment type="similarity">
    <text evidence="5">Belongs to the anaerobic coproporphyrinogen-III oxidase family. HemW subfamily.</text>
</comment>
<keyword id="KW-0004">4Fe-4S</keyword>
<keyword id="KW-0143">Chaperone</keyword>
<keyword id="KW-0349">Heme</keyword>
<keyword id="KW-0408">Iron</keyword>
<keyword id="KW-0411">Iron-sulfur</keyword>
<keyword id="KW-0479">Metal-binding</keyword>
<keyword id="KW-0496">Mitochondrion</keyword>
<keyword id="KW-1185">Reference proteome</keyword>
<keyword id="KW-0949">S-adenosyl-L-methionine</keyword>
<keyword id="KW-0809">Transit peptide</keyword>
<organism>
    <name type="scientific">Dictyostelium discoideum</name>
    <name type="common">Social amoeba</name>
    <dbReference type="NCBI Taxonomy" id="44689"/>
    <lineage>
        <taxon>Eukaryota</taxon>
        <taxon>Amoebozoa</taxon>
        <taxon>Evosea</taxon>
        <taxon>Eumycetozoa</taxon>
        <taxon>Dictyostelia</taxon>
        <taxon>Dictyosteliales</taxon>
        <taxon>Dictyosteliaceae</taxon>
        <taxon>Dictyostelium</taxon>
    </lineage>
</organism>
<proteinExistence type="inferred from homology"/>
<reference key="1">
    <citation type="journal article" date="2005" name="Nature">
        <title>The genome of the social amoeba Dictyostelium discoideum.</title>
        <authorList>
            <person name="Eichinger L."/>
            <person name="Pachebat J.A."/>
            <person name="Gloeckner G."/>
            <person name="Rajandream M.A."/>
            <person name="Sucgang R."/>
            <person name="Berriman M."/>
            <person name="Song J."/>
            <person name="Olsen R."/>
            <person name="Szafranski K."/>
            <person name="Xu Q."/>
            <person name="Tunggal B."/>
            <person name="Kummerfeld S."/>
            <person name="Madera M."/>
            <person name="Konfortov B.A."/>
            <person name="Rivero F."/>
            <person name="Bankier A.T."/>
            <person name="Lehmann R."/>
            <person name="Hamlin N."/>
            <person name="Davies R."/>
            <person name="Gaudet P."/>
            <person name="Fey P."/>
            <person name="Pilcher K."/>
            <person name="Chen G."/>
            <person name="Saunders D."/>
            <person name="Sodergren E.J."/>
            <person name="Davis P."/>
            <person name="Kerhornou A."/>
            <person name="Nie X."/>
            <person name="Hall N."/>
            <person name="Anjard C."/>
            <person name="Hemphill L."/>
            <person name="Bason N."/>
            <person name="Farbrother P."/>
            <person name="Desany B."/>
            <person name="Just E."/>
            <person name="Morio T."/>
            <person name="Rost R."/>
            <person name="Churcher C.M."/>
            <person name="Cooper J."/>
            <person name="Haydock S."/>
            <person name="van Driessche N."/>
            <person name="Cronin A."/>
            <person name="Goodhead I."/>
            <person name="Muzny D.M."/>
            <person name="Mourier T."/>
            <person name="Pain A."/>
            <person name="Lu M."/>
            <person name="Harper D."/>
            <person name="Lindsay R."/>
            <person name="Hauser H."/>
            <person name="James K.D."/>
            <person name="Quiles M."/>
            <person name="Madan Babu M."/>
            <person name="Saito T."/>
            <person name="Buchrieser C."/>
            <person name="Wardroper A."/>
            <person name="Felder M."/>
            <person name="Thangavelu M."/>
            <person name="Johnson D."/>
            <person name="Knights A."/>
            <person name="Loulseged H."/>
            <person name="Mungall K.L."/>
            <person name="Oliver K."/>
            <person name="Price C."/>
            <person name="Quail M.A."/>
            <person name="Urushihara H."/>
            <person name="Hernandez J."/>
            <person name="Rabbinowitsch E."/>
            <person name="Steffen D."/>
            <person name="Sanders M."/>
            <person name="Ma J."/>
            <person name="Kohara Y."/>
            <person name="Sharp S."/>
            <person name="Simmonds M.N."/>
            <person name="Spiegler S."/>
            <person name="Tivey A."/>
            <person name="Sugano S."/>
            <person name="White B."/>
            <person name="Walker D."/>
            <person name="Woodward J.R."/>
            <person name="Winckler T."/>
            <person name="Tanaka Y."/>
            <person name="Shaulsky G."/>
            <person name="Schleicher M."/>
            <person name="Weinstock G.M."/>
            <person name="Rosenthal A."/>
            <person name="Cox E.C."/>
            <person name="Chisholm R.L."/>
            <person name="Gibbs R.A."/>
            <person name="Loomis W.F."/>
            <person name="Platzer M."/>
            <person name="Kay R.R."/>
            <person name="Williams J.G."/>
            <person name="Dear P.H."/>
            <person name="Noegel A.A."/>
            <person name="Barrell B.G."/>
            <person name="Kuspa A."/>
        </authorList>
    </citation>
    <scope>NUCLEOTIDE SEQUENCE [LARGE SCALE GENOMIC DNA]</scope>
    <source>
        <strain>AX4</strain>
    </source>
</reference>
<dbReference type="EMBL" id="AAFI02000036">
    <property type="protein sequence ID" value="EAL67184.1"/>
    <property type="molecule type" value="Genomic_DNA"/>
</dbReference>
<dbReference type="RefSeq" id="XP_641161.1">
    <property type="nucleotide sequence ID" value="XM_636069.1"/>
</dbReference>
<dbReference type="SMR" id="Q54VE8"/>
<dbReference type="FunCoup" id="Q54VE8">
    <property type="interactions" value="108"/>
</dbReference>
<dbReference type="STRING" id="44689.Q54VE8"/>
<dbReference type="PaxDb" id="44689-DDB0205185"/>
<dbReference type="EnsemblProtists" id="EAL67184">
    <property type="protein sequence ID" value="EAL67184"/>
    <property type="gene ID" value="DDB_G0280411"/>
</dbReference>
<dbReference type="GeneID" id="8622541"/>
<dbReference type="KEGG" id="ddi:DDB_G0280411"/>
<dbReference type="dictyBase" id="DDB_G0280411"/>
<dbReference type="VEuPathDB" id="AmoebaDB:DDB_G0280411"/>
<dbReference type="eggNOG" id="ENOG502QRH0">
    <property type="taxonomic scope" value="Eukaryota"/>
</dbReference>
<dbReference type="HOGENOM" id="CLU_027579_0_1_1"/>
<dbReference type="InParanoid" id="Q54VE8"/>
<dbReference type="OMA" id="HIPWCVR"/>
<dbReference type="PhylomeDB" id="Q54VE8"/>
<dbReference type="PRO" id="PR:Q54VE8"/>
<dbReference type="Proteomes" id="UP000002195">
    <property type="component" value="Chromosome 3"/>
</dbReference>
<dbReference type="GO" id="GO:0005737">
    <property type="term" value="C:cytoplasm"/>
    <property type="evidence" value="ECO:0000318"/>
    <property type="project" value="GO_Central"/>
</dbReference>
<dbReference type="GO" id="GO:0005739">
    <property type="term" value="C:mitochondrion"/>
    <property type="evidence" value="ECO:0007669"/>
    <property type="project" value="UniProtKB-SubCell"/>
</dbReference>
<dbReference type="GO" id="GO:0051539">
    <property type="term" value="F:4 iron, 4 sulfur cluster binding"/>
    <property type="evidence" value="ECO:0000318"/>
    <property type="project" value="GO_Central"/>
</dbReference>
<dbReference type="GO" id="GO:0004109">
    <property type="term" value="F:coproporphyrinogen oxidase activity"/>
    <property type="evidence" value="ECO:0007669"/>
    <property type="project" value="InterPro"/>
</dbReference>
<dbReference type="GO" id="GO:0046872">
    <property type="term" value="F:metal ion binding"/>
    <property type="evidence" value="ECO:0007669"/>
    <property type="project" value="UniProtKB-KW"/>
</dbReference>
<dbReference type="GO" id="GO:0006779">
    <property type="term" value="P:porphyrin-containing compound biosynthetic process"/>
    <property type="evidence" value="ECO:0000318"/>
    <property type="project" value="GO_Central"/>
</dbReference>
<dbReference type="CDD" id="cd01335">
    <property type="entry name" value="Radical_SAM"/>
    <property type="match status" value="1"/>
</dbReference>
<dbReference type="InterPro" id="IPR034505">
    <property type="entry name" value="Coproporphyrinogen-III_oxidase"/>
</dbReference>
<dbReference type="InterPro" id="IPR006638">
    <property type="entry name" value="Elp3/MiaA/NifB-like_rSAM"/>
</dbReference>
<dbReference type="InterPro" id="IPR010723">
    <property type="entry name" value="HemN_C"/>
</dbReference>
<dbReference type="InterPro" id="IPR004559">
    <property type="entry name" value="HemW-like"/>
</dbReference>
<dbReference type="InterPro" id="IPR007197">
    <property type="entry name" value="rSAM"/>
</dbReference>
<dbReference type="NCBIfam" id="TIGR00539">
    <property type="entry name" value="hemN_rel"/>
    <property type="match status" value="1"/>
</dbReference>
<dbReference type="PANTHER" id="PTHR13932">
    <property type="entry name" value="COPROPORPHYRINIGEN III OXIDASE"/>
    <property type="match status" value="1"/>
</dbReference>
<dbReference type="PANTHER" id="PTHR13932:SF5">
    <property type="entry name" value="RADICAL S-ADENOSYL METHIONINE DOMAIN-CONTAINING PROTEIN 1, MITOCHONDRIAL"/>
    <property type="match status" value="1"/>
</dbReference>
<dbReference type="Pfam" id="PF06969">
    <property type="entry name" value="HemN_C"/>
    <property type="match status" value="1"/>
</dbReference>
<dbReference type="Pfam" id="PF04055">
    <property type="entry name" value="Radical_SAM"/>
    <property type="match status" value="1"/>
</dbReference>
<dbReference type="SFLD" id="SFLDF00562">
    <property type="entry name" value="HemN-like__clustered_with_heat"/>
    <property type="match status" value="1"/>
</dbReference>
<dbReference type="SFLD" id="SFLDF00288">
    <property type="entry name" value="HemN-like__clustered_with_nucl"/>
    <property type="match status" value="1"/>
</dbReference>
<dbReference type="SFLD" id="SFLDS00029">
    <property type="entry name" value="Radical_SAM"/>
    <property type="match status" value="1"/>
</dbReference>
<dbReference type="SMART" id="SM00729">
    <property type="entry name" value="Elp3"/>
    <property type="match status" value="1"/>
</dbReference>
<dbReference type="SUPFAM" id="SSF102114">
    <property type="entry name" value="Radical SAM enzymes"/>
    <property type="match status" value="1"/>
</dbReference>
<dbReference type="PROSITE" id="PS51918">
    <property type="entry name" value="RADICAL_SAM"/>
    <property type="match status" value="1"/>
</dbReference>
<evidence type="ECO:0000250" key="1">
    <source>
        <dbReference type="UniProtKB" id="P32131"/>
    </source>
</evidence>
<evidence type="ECO:0000250" key="2">
    <source>
        <dbReference type="UniProtKB" id="Q9HA92"/>
    </source>
</evidence>
<evidence type="ECO:0000255" key="3"/>
<evidence type="ECO:0000255" key="4">
    <source>
        <dbReference type="PROSITE-ProRule" id="PRU01266"/>
    </source>
</evidence>
<evidence type="ECO:0000305" key="5"/>
<name>RSAD1_DICDI</name>
<sequence length="446" mass="51495">MINKIVKNVIENQFKGYNKLKDLPISLFVYWPYCSKICPYCNFNKYRDSDKVDHERMSKSLSRELESFVKNIYLNSNENSFIRERPITSIYFGGGTPSLAKISTFVETIETMKKLFPSSLSIEDIEITLEVNPDQKDLKNLLKDFKKYVGVNRVSLGVQSLVDKDLHFLGRTHNRIQAEESIKIARDLFDHVTFDLIYSRTIDQTLEQWRNELRYALNLADGNGHVSLYTLTFEQGTSFYRRLSSKGNKFKIIPPDDQKSSDLYDLTVCEAEAMGFQQYEISSFASSHNQKGKHNLNYWRSGDFIGIGPGASSRLTTLNNNNNNNNQISRYSFKNILHPKEWMEKLNSKEILCNAFIEDEFNPTIPLTNFEVAEEMLLNGLRTIEGVQLSTFTFQTNGLTFDQFLNMKQVEILQEQGFLILEPTCLKLTGNGRKLLDTIIPKILKY</sequence>